<proteinExistence type="inferred from homology"/>
<accession>A6V7K5</accession>
<comment type="function">
    <text evidence="1">Succinyl-CoA synthetase functions in the citric acid cycle (TCA), coupling the hydrolysis of succinyl-CoA to the synthesis of either ATP or GTP and thus represents the only step of substrate-level phosphorylation in the TCA. The beta subunit provides nucleotide specificity of the enzyme and binds the substrate succinate, while the binding sites for coenzyme A and phosphate are found in the alpha subunit.</text>
</comment>
<comment type="catalytic activity">
    <reaction evidence="1">
        <text>succinate + ATP + CoA = succinyl-CoA + ADP + phosphate</text>
        <dbReference type="Rhea" id="RHEA:17661"/>
        <dbReference type="ChEBI" id="CHEBI:30031"/>
        <dbReference type="ChEBI" id="CHEBI:30616"/>
        <dbReference type="ChEBI" id="CHEBI:43474"/>
        <dbReference type="ChEBI" id="CHEBI:57287"/>
        <dbReference type="ChEBI" id="CHEBI:57292"/>
        <dbReference type="ChEBI" id="CHEBI:456216"/>
        <dbReference type="EC" id="6.2.1.5"/>
    </reaction>
    <physiologicalReaction direction="right-to-left" evidence="1">
        <dbReference type="Rhea" id="RHEA:17663"/>
    </physiologicalReaction>
</comment>
<comment type="catalytic activity">
    <reaction evidence="1">
        <text>GTP + succinate + CoA = succinyl-CoA + GDP + phosphate</text>
        <dbReference type="Rhea" id="RHEA:22120"/>
        <dbReference type="ChEBI" id="CHEBI:30031"/>
        <dbReference type="ChEBI" id="CHEBI:37565"/>
        <dbReference type="ChEBI" id="CHEBI:43474"/>
        <dbReference type="ChEBI" id="CHEBI:57287"/>
        <dbReference type="ChEBI" id="CHEBI:57292"/>
        <dbReference type="ChEBI" id="CHEBI:58189"/>
    </reaction>
    <physiologicalReaction direction="right-to-left" evidence="1">
        <dbReference type="Rhea" id="RHEA:22122"/>
    </physiologicalReaction>
</comment>
<comment type="cofactor">
    <cofactor evidence="1">
        <name>Mg(2+)</name>
        <dbReference type="ChEBI" id="CHEBI:18420"/>
    </cofactor>
    <text evidence="1">Binds 1 Mg(2+) ion per subunit.</text>
</comment>
<comment type="pathway">
    <text evidence="1">Carbohydrate metabolism; tricarboxylic acid cycle; succinate from succinyl-CoA (ligase route): step 1/1.</text>
</comment>
<comment type="subunit">
    <text evidence="1">Heterotetramer of two alpha and two beta subunits.</text>
</comment>
<comment type="similarity">
    <text evidence="1">Belongs to the succinate/malate CoA ligase beta subunit family.</text>
</comment>
<gene>
    <name evidence="1" type="primary">sucC</name>
    <name type="ordered locus">PSPA7_3686</name>
</gene>
<sequence length="388" mass="41513">MNLHEYQGKQLFAEYGLPVSKGFAVDTPEEAAEACDKIGGGEWVVKAQVHAGGRGKAGGVKLVKSKEDAKAFAQQWLGKNLVTYQTDANGQPVSKILVESCTDIDKELYLGAVVDRSSRRIVFMASTEGGVDIEKVAHDTPEKILKATIDPLVGAQPYQGRELAFQLGLKGDQIKQFTHIFVGLAKLFQDYDLALLEVNPLVIKKDGNLHCLDAKINIDSNALYRQPKLRAMHDPSQDDAREAHAQKWELNYVALEGNIGCMVNGAGLAMGTMDIVNLHGGKPANFLDVGGGATKERVTEAFKIILSDSNVKAVLVNIFGGIVRCDMIAEGIIGAVKEVGVKVPVVVRLEGNNAELGAKVLAESGLNIIAATSLTDAAQQVVKAAEGK</sequence>
<organism>
    <name type="scientific">Pseudomonas paraeruginosa (strain DSM 24068 / PA7)</name>
    <name type="common">Pseudomonas aeruginosa (strain PA7)</name>
    <dbReference type="NCBI Taxonomy" id="381754"/>
    <lineage>
        <taxon>Bacteria</taxon>
        <taxon>Pseudomonadati</taxon>
        <taxon>Pseudomonadota</taxon>
        <taxon>Gammaproteobacteria</taxon>
        <taxon>Pseudomonadales</taxon>
        <taxon>Pseudomonadaceae</taxon>
        <taxon>Pseudomonas</taxon>
        <taxon>Pseudomonas paraeruginosa</taxon>
    </lineage>
</organism>
<feature type="chain" id="PRO_1000082165" description="Succinate--CoA ligase [ADP-forming] subunit beta">
    <location>
        <begin position="1"/>
        <end position="388"/>
    </location>
</feature>
<feature type="domain" description="ATP-grasp" evidence="1">
    <location>
        <begin position="9"/>
        <end position="244"/>
    </location>
</feature>
<feature type="binding site" evidence="1">
    <location>
        <position position="46"/>
    </location>
    <ligand>
        <name>ATP</name>
        <dbReference type="ChEBI" id="CHEBI:30616"/>
    </ligand>
</feature>
<feature type="binding site" evidence="1">
    <location>
        <begin position="53"/>
        <end position="55"/>
    </location>
    <ligand>
        <name>ATP</name>
        <dbReference type="ChEBI" id="CHEBI:30616"/>
    </ligand>
</feature>
<feature type="binding site" evidence="1">
    <location>
        <position position="99"/>
    </location>
    <ligand>
        <name>ATP</name>
        <dbReference type="ChEBI" id="CHEBI:30616"/>
    </ligand>
</feature>
<feature type="binding site" evidence="1">
    <location>
        <position position="102"/>
    </location>
    <ligand>
        <name>ATP</name>
        <dbReference type="ChEBI" id="CHEBI:30616"/>
    </ligand>
</feature>
<feature type="binding site" evidence="1">
    <location>
        <position position="107"/>
    </location>
    <ligand>
        <name>ATP</name>
        <dbReference type="ChEBI" id="CHEBI:30616"/>
    </ligand>
</feature>
<feature type="binding site" evidence="1">
    <location>
        <position position="199"/>
    </location>
    <ligand>
        <name>Mg(2+)</name>
        <dbReference type="ChEBI" id="CHEBI:18420"/>
    </ligand>
</feature>
<feature type="binding site" evidence="1">
    <location>
        <position position="213"/>
    </location>
    <ligand>
        <name>Mg(2+)</name>
        <dbReference type="ChEBI" id="CHEBI:18420"/>
    </ligand>
</feature>
<feature type="binding site" evidence="1">
    <location>
        <position position="264"/>
    </location>
    <ligand>
        <name>substrate</name>
        <note>ligand shared with subunit alpha</note>
    </ligand>
</feature>
<feature type="binding site" evidence="1">
    <location>
        <begin position="321"/>
        <end position="323"/>
    </location>
    <ligand>
        <name>substrate</name>
        <note>ligand shared with subunit alpha</note>
    </ligand>
</feature>
<name>SUCC_PSEP7</name>
<reference key="1">
    <citation type="submission" date="2007-06" db="EMBL/GenBank/DDBJ databases">
        <authorList>
            <person name="Dodson R.J."/>
            <person name="Harkins D."/>
            <person name="Paulsen I.T."/>
        </authorList>
    </citation>
    <scope>NUCLEOTIDE SEQUENCE [LARGE SCALE GENOMIC DNA]</scope>
    <source>
        <strain>DSM 24068 / PA7</strain>
    </source>
</reference>
<protein>
    <recommendedName>
        <fullName evidence="1">Succinate--CoA ligase [ADP-forming] subunit beta</fullName>
        <ecNumber evidence="1">6.2.1.5</ecNumber>
    </recommendedName>
    <alternativeName>
        <fullName evidence="1">Succinyl-CoA synthetase subunit beta</fullName>
        <shortName evidence="1">SCS-beta</shortName>
    </alternativeName>
</protein>
<dbReference type="EC" id="6.2.1.5" evidence="1"/>
<dbReference type="EMBL" id="CP000744">
    <property type="protein sequence ID" value="ABR82285.1"/>
    <property type="molecule type" value="Genomic_DNA"/>
</dbReference>
<dbReference type="RefSeq" id="WP_003149379.1">
    <property type="nucleotide sequence ID" value="NC_009656.1"/>
</dbReference>
<dbReference type="SMR" id="A6V7K5"/>
<dbReference type="KEGG" id="pap:PSPA7_3686"/>
<dbReference type="HOGENOM" id="CLU_037430_0_2_6"/>
<dbReference type="UniPathway" id="UPA00223">
    <property type="reaction ID" value="UER00999"/>
</dbReference>
<dbReference type="Proteomes" id="UP000001582">
    <property type="component" value="Chromosome"/>
</dbReference>
<dbReference type="GO" id="GO:0005829">
    <property type="term" value="C:cytosol"/>
    <property type="evidence" value="ECO:0007669"/>
    <property type="project" value="TreeGrafter"/>
</dbReference>
<dbReference type="GO" id="GO:0042709">
    <property type="term" value="C:succinate-CoA ligase complex"/>
    <property type="evidence" value="ECO:0007669"/>
    <property type="project" value="TreeGrafter"/>
</dbReference>
<dbReference type="GO" id="GO:0005524">
    <property type="term" value="F:ATP binding"/>
    <property type="evidence" value="ECO:0007669"/>
    <property type="project" value="UniProtKB-UniRule"/>
</dbReference>
<dbReference type="GO" id="GO:0000287">
    <property type="term" value="F:magnesium ion binding"/>
    <property type="evidence" value="ECO:0007669"/>
    <property type="project" value="UniProtKB-UniRule"/>
</dbReference>
<dbReference type="GO" id="GO:0004775">
    <property type="term" value="F:succinate-CoA ligase (ADP-forming) activity"/>
    <property type="evidence" value="ECO:0007669"/>
    <property type="project" value="UniProtKB-UniRule"/>
</dbReference>
<dbReference type="GO" id="GO:0004776">
    <property type="term" value="F:succinate-CoA ligase (GDP-forming) activity"/>
    <property type="evidence" value="ECO:0007669"/>
    <property type="project" value="RHEA"/>
</dbReference>
<dbReference type="GO" id="GO:0006104">
    <property type="term" value="P:succinyl-CoA metabolic process"/>
    <property type="evidence" value="ECO:0007669"/>
    <property type="project" value="TreeGrafter"/>
</dbReference>
<dbReference type="GO" id="GO:0006099">
    <property type="term" value="P:tricarboxylic acid cycle"/>
    <property type="evidence" value="ECO:0007669"/>
    <property type="project" value="UniProtKB-UniRule"/>
</dbReference>
<dbReference type="FunFam" id="3.30.1490.20:FF:000002">
    <property type="entry name" value="Succinate--CoA ligase [ADP-forming] subunit beta"/>
    <property type="match status" value="1"/>
</dbReference>
<dbReference type="FunFam" id="3.30.470.20:FF:000002">
    <property type="entry name" value="Succinate--CoA ligase [ADP-forming] subunit beta"/>
    <property type="match status" value="1"/>
</dbReference>
<dbReference type="FunFam" id="3.40.50.261:FF:000001">
    <property type="entry name" value="Succinate--CoA ligase [ADP-forming] subunit beta"/>
    <property type="match status" value="1"/>
</dbReference>
<dbReference type="Gene3D" id="3.30.1490.20">
    <property type="entry name" value="ATP-grasp fold, A domain"/>
    <property type="match status" value="1"/>
</dbReference>
<dbReference type="Gene3D" id="3.30.470.20">
    <property type="entry name" value="ATP-grasp fold, B domain"/>
    <property type="match status" value="1"/>
</dbReference>
<dbReference type="Gene3D" id="3.40.50.261">
    <property type="entry name" value="Succinyl-CoA synthetase domains"/>
    <property type="match status" value="1"/>
</dbReference>
<dbReference type="HAMAP" id="MF_00558">
    <property type="entry name" value="Succ_CoA_beta"/>
    <property type="match status" value="1"/>
</dbReference>
<dbReference type="InterPro" id="IPR011761">
    <property type="entry name" value="ATP-grasp"/>
</dbReference>
<dbReference type="InterPro" id="IPR013650">
    <property type="entry name" value="ATP-grasp_succ-CoA_synth-type"/>
</dbReference>
<dbReference type="InterPro" id="IPR013815">
    <property type="entry name" value="ATP_grasp_subdomain_1"/>
</dbReference>
<dbReference type="InterPro" id="IPR017866">
    <property type="entry name" value="Succ-CoA_synthase_bsu_CS"/>
</dbReference>
<dbReference type="InterPro" id="IPR005811">
    <property type="entry name" value="SUCC_ACL_C"/>
</dbReference>
<dbReference type="InterPro" id="IPR005809">
    <property type="entry name" value="Succ_CoA_ligase-like_bsu"/>
</dbReference>
<dbReference type="InterPro" id="IPR016102">
    <property type="entry name" value="Succinyl-CoA_synth-like"/>
</dbReference>
<dbReference type="NCBIfam" id="NF001913">
    <property type="entry name" value="PRK00696.1"/>
    <property type="match status" value="1"/>
</dbReference>
<dbReference type="NCBIfam" id="TIGR01016">
    <property type="entry name" value="sucCoAbeta"/>
    <property type="match status" value="1"/>
</dbReference>
<dbReference type="PANTHER" id="PTHR11815:SF10">
    <property type="entry name" value="SUCCINATE--COA LIGASE [GDP-FORMING] SUBUNIT BETA, MITOCHONDRIAL"/>
    <property type="match status" value="1"/>
</dbReference>
<dbReference type="PANTHER" id="PTHR11815">
    <property type="entry name" value="SUCCINYL-COA SYNTHETASE BETA CHAIN"/>
    <property type="match status" value="1"/>
</dbReference>
<dbReference type="Pfam" id="PF08442">
    <property type="entry name" value="ATP-grasp_2"/>
    <property type="match status" value="1"/>
</dbReference>
<dbReference type="Pfam" id="PF00549">
    <property type="entry name" value="Ligase_CoA"/>
    <property type="match status" value="1"/>
</dbReference>
<dbReference type="PIRSF" id="PIRSF001554">
    <property type="entry name" value="SucCS_beta"/>
    <property type="match status" value="1"/>
</dbReference>
<dbReference type="SUPFAM" id="SSF56059">
    <property type="entry name" value="Glutathione synthetase ATP-binding domain-like"/>
    <property type="match status" value="1"/>
</dbReference>
<dbReference type="SUPFAM" id="SSF52210">
    <property type="entry name" value="Succinyl-CoA synthetase domains"/>
    <property type="match status" value="1"/>
</dbReference>
<dbReference type="PROSITE" id="PS50975">
    <property type="entry name" value="ATP_GRASP"/>
    <property type="match status" value="1"/>
</dbReference>
<dbReference type="PROSITE" id="PS01217">
    <property type="entry name" value="SUCCINYL_COA_LIG_3"/>
    <property type="match status" value="1"/>
</dbReference>
<evidence type="ECO:0000255" key="1">
    <source>
        <dbReference type="HAMAP-Rule" id="MF_00558"/>
    </source>
</evidence>
<keyword id="KW-0067">ATP-binding</keyword>
<keyword id="KW-0436">Ligase</keyword>
<keyword id="KW-0460">Magnesium</keyword>
<keyword id="KW-0479">Metal-binding</keyword>
<keyword id="KW-0547">Nucleotide-binding</keyword>
<keyword id="KW-0816">Tricarboxylic acid cycle</keyword>